<proteinExistence type="inferred from homology"/>
<feature type="chain" id="PRO_0000382580" description="Ribosomal RNA small subunit methyltransferase F">
    <location>
        <begin position="1"/>
        <end position="479"/>
    </location>
</feature>
<feature type="active site" description="Nucleophile" evidence="1">
    <location>
        <position position="247"/>
    </location>
</feature>
<feature type="binding site" evidence="1">
    <location>
        <begin position="125"/>
        <end position="131"/>
    </location>
    <ligand>
        <name>S-adenosyl-L-methionine</name>
        <dbReference type="ChEBI" id="CHEBI:59789"/>
    </ligand>
</feature>
<feature type="binding site" evidence="1">
    <location>
        <position position="149"/>
    </location>
    <ligand>
        <name>S-adenosyl-L-methionine</name>
        <dbReference type="ChEBI" id="CHEBI:59789"/>
    </ligand>
</feature>
<feature type="binding site" evidence="1">
    <location>
        <position position="176"/>
    </location>
    <ligand>
        <name>S-adenosyl-L-methionine</name>
        <dbReference type="ChEBI" id="CHEBI:59789"/>
    </ligand>
</feature>
<feature type="binding site" evidence="1">
    <location>
        <position position="194"/>
    </location>
    <ligand>
        <name>S-adenosyl-L-methionine</name>
        <dbReference type="ChEBI" id="CHEBI:59789"/>
    </ligand>
</feature>
<dbReference type="EC" id="2.1.1.178" evidence="1"/>
<dbReference type="EMBL" id="CP000886">
    <property type="protein sequence ID" value="ABX66767.1"/>
    <property type="status" value="ALT_INIT"/>
    <property type="molecule type" value="Genomic_DNA"/>
</dbReference>
<dbReference type="RefSeq" id="WP_024132151.1">
    <property type="nucleotide sequence ID" value="NC_010102.1"/>
</dbReference>
<dbReference type="SMR" id="A9MV57"/>
<dbReference type="KEGG" id="spq:SPAB_01359"/>
<dbReference type="PATRIC" id="fig|1016998.12.peg.1281"/>
<dbReference type="HOGENOM" id="CLU_005316_6_2_6"/>
<dbReference type="BioCyc" id="SENT1016998:SPAB_RS05560-MONOMER"/>
<dbReference type="Proteomes" id="UP000008556">
    <property type="component" value="Chromosome"/>
</dbReference>
<dbReference type="GO" id="GO:0005737">
    <property type="term" value="C:cytoplasm"/>
    <property type="evidence" value="ECO:0007669"/>
    <property type="project" value="UniProtKB-SubCell"/>
</dbReference>
<dbReference type="GO" id="GO:0003723">
    <property type="term" value="F:RNA binding"/>
    <property type="evidence" value="ECO:0007669"/>
    <property type="project" value="UniProtKB-KW"/>
</dbReference>
<dbReference type="GO" id="GO:0009383">
    <property type="term" value="F:rRNA (cytosine-C5-)-methyltransferase activity"/>
    <property type="evidence" value="ECO:0007669"/>
    <property type="project" value="TreeGrafter"/>
</dbReference>
<dbReference type="GO" id="GO:0070475">
    <property type="term" value="P:rRNA base methylation"/>
    <property type="evidence" value="ECO:0007669"/>
    <property type="project" value="TreeGrafter"/>
</dbReference>
<dbReference type="CDD" id="cd02440">
    <property type="entry name" value="AdoMet_MTases"/>
    <property type="match status" value="1"/>
</dbReference>
<dbReference type="FunFam" id="3.10.450.720:FF:000001">
    <property type="entry name" value="Ribosomal RNA small subunit methyltransferase F"/>
    <property type="match status" value="1"/>
</dbReference>
<dbReference type="FunFam" id="3.40.50.150:FF:000079">
    <property type="entry name" value="Ribosomal RNA small subunit methyltransferase F"/>
    <property type="match status" value="1"/>
</dbReference>
<dbReference type="Gene3D" id="3.10.450.720">
    <property type="match status" value="1"/>
</dbReference>
<dbReference type="Gene3D" id="3.40.50.150">
    <property type="entry name" value="Vaccinia Virus protein VP39"/>
    <property type="match status" value="1"/>
</dbReference>
<dbReference type="HAMAP" id="MF_01579">
    <property type="entry name" value="16SrRNA_methyltr_F"/>
    <property type="match status" value="1"/>
</dbReference>
<dbReference type="InterPro" id="IPR031341">
    <property type="entry name" value="Methyltr_RsmF_N"/>
</dbReference>
<dbReference type="InterPro" id="IPR049560">
    <property type="entry name" value="MeTrfase_RsmB-F_NOP2_cat"/>
</dbReference>
<dbReference type="InterPro" id="IPR001678">
    <property type="entry name" value="MeTrfase_RsmB-F_NOP2_dom"/>
</dbReference>
<dbReference type="InterPro" id="IPR027391">
    <property type="entry name" value="Nol1_Nop2_Fmu_2"/>
</dbReference>
<dbReference type="InterPro" id="IPR011023">
    <property type="entry name" value="Nop2p"/>
</dbReference>
<dbReference type="InterPro" id="IPR023267">
    <property type="entry name" value="RCMT"/>
</dbReference>
<dbReference type="InterPro" id="IPR023545">
    <property type="entry name" value="rRNA_ssu_MeTfrase_F"/>
</dbReference>
<dbReference type="InterPro" id="IPR018314">
    <property type="entry name" value="RsmB/NOL1/NOP2-like_CS"/>
</dbReference>
<dbReference type="InterPro" id="IPR029063">
    <property type="entry name" value="SAM-dependent_MTases_sf"/>
</dbReference>
<dbReference type="InterPro" id="IPR048457">
    <property type="entry name" value="YebU_pre-PUA_dom"/>
</dbReference>
<dbReference type="NCBIfam" id="TIGR00446">
    <property type="entry name" value="nop2p"/>
    <property type="match status" value="1"/>
</dbReference>
<dbReference type="NCBIfam" id="NF008898">
    <property type="entry name" value="PRK11933.1"/>
    <property type="match status" value="1"/>
</dbReference>
<dbReference type="PANTHER" id="PTHR22807:SF30">
    <property type="entry name" value="28S RRNA (CYTOSINE(4447)-C(5))-METHYLTRANSFERASE-RELATED"/>
    <property type="match status" value="1"/>
</dbReference>
<dbReference type="PANTHER" id="PTHR22807">
    <property type="entry name" value="NOP2 YEAST -RELATED NOL1/NOP2/FMU SUN DOMAIN-CONTAINING"/>
    <property type="match status" value="1"/>
</dbReference>
<dbReference type="Pfam" id="PF01189">
    <property type="entry name" value="Methyltr_RsmB-F"/>
    <property type="match status" value="1"/>
</dbReference>
<dbReference type="Pfam" id="PF17125">
    <property type="entry name" value="Methyltr_RsmF_N"/>
    <property type="match status" value="1"/>
</dbReference>
<dbReference type="Pfam" id="PF13636">
    <property type="entry name" value="Methyltranf_PUA"/>
    <property type="match status" value="1"/>
</dbReference>
<dbReference type="Pfam" id="PF21150">
    <property type="entry name" value="YebU_pre-PUA_dom"/>
    <property type="match status" value="1"/>
</dbReference>
<dbReference type="PRINTS" id="PR02008">
    <property type="entry name" value="RCMTFAMILY"/>
</dbReference>
<dbReference type="SUPFAM" id="SSF53335">
    <property type="entry name" value="S-adenosyl-L-methionine-dependent methyltransferases"/>
    <property type="match status" value="1"/>
</dbReference>
<dbReference type="PROSITE" id="PS01153">
    <property type="entry name" value="NOL1_NOP2_SUN"/>
    <property type="match status" value="1"/>
</dbReference>
<dbReference type="PROSITE" id="PS51686">
    <property type="entry name" value="SAM_MT_RSMB_NOP"/>
    <property type="match status" value="1"/>
</dbReference>
<organism>
    <name type="scientific">Salmonella paratyphi B (strain ATCC BAA-1250 / SPB7)</name>
    <dbReference type="NCBI Taxonomy" id="1016998"/>
    <lineage>
        <taxon>Bacteria</taxon>
        <taxon>Pseudomonadati</taxon>
        <taxon>Pseudomonadota</taxon>
        <taxon>Gammaproteobacteria</taxon>
        <taxon>Enterobacterales</taxon>
        <taxon>Enterobacteriaceae</taxon>
        <taxon>Salmonella</taxon>
    </lineage>
</organism>
<comment type="function">
    <text evidence="1">Specifically methylates the cytosine at position 1407 (m5C1407) of 16S rRNA.</text>
</comment>
<comment type="catalytic activity">
    <reaction evidence="1">
        <text>cytidine(1407) in 16S rRNA + S-adenosyl-L-methionine = 5-methylcytidine(1407) in 16S rRNA + S-adenosyl-L-homocysteine + H(+)</text>
        <dbReference type="Rhea" id="RHEA:42756"/>
        <dbReference type="Rhea" id="RHEA-COMP:10223"/>
        <dbReference type="Rhea" id="RHEA-COMP:10224"/>
        <dbReference type="ChEBI" id="CHEBI:15378"/>
        <dbReference type="ChEBI" id="CHEBI:57856"/>
        <dbReference type="ChEBI" id="CHEBI:59789"/>
        <dbReference type="ChEBI" id="CHEBI:74483"/>
        <dbReference type="ChEBI" id="CHEBI:82748"/>
        <dbReference type="EC" id="2.1.1.178"/>
    </reaction>
</comment>
<comment type="subcellular location">
    <subcellularLocation>
        <location evidence="1">Cytoplasm</location>
    </subcellularLocation>
</comment>
<comment type="similarity">
    <text evidence="1">Belongs to the class I-like SAM-binding methyltransferase superfamily. RsmB/NOP family.</text>
</comment>
<comment type="sequence caution" evidence="2">
    <conflict type="erroneous initiation">
        <sequence resource="EMBL-CDS" id="ABX66767"/>
    </conflict>
</comment>
<keyword id="KW-0963">Cytoplasm</keyword>
<keyword id="KW-0489">Methyltransferase</keyword>
<keyword id="KW-0694">RNA-binding</keyword>
<keyword id="KW-0698">rRNA processing</keyword>
<keyword id="KW-0949">S-adenosyl-L-methionine</keyword>
<keyword id="KW-0808">Transferase</keyword>
<sequence length="479" mass="53298">MAQHAVYFPDAFLTQMREAMPSTLSFDEFISACQRPLRRSIRINTLKISVADFLALIAPYGWSLTPIPWCHEGFWIERDDEEALPLGSTAEHLSGLFYIQEASSMLPVAALFADDNHPQRVMDMAAAPGSKTTQIAARMGNRGAILANEFSASRVKVLHANISRCGIANTALTHFDGRVFGAALPEMFDAILLDAPCSGEGVVRKDPDALKNWSPESNLDIAATQRELLDSAFHALRPGGTLVYSTCTLNRQENEAVCLWLKETYADAVEFLPLGDLFPDADRALTPEGFLHVFPQIYDCEGFFVARLRKMSSLPAMPAPGYKVGAFPFTPLKGREALHVTQAANAVGLLWDENLHLWQREKEVWLFPAEIESLIGKVRFSRLGIKLAESHNKGYRWQHEATIALACPTHAHAFELSAQEAEEWYRGRDIYPQTPPAADDVLVTFQRQPLGLAKRIGSRIKNSYPRELVRDGKLFTGNS</sequence>
<evidence type="ECO:0000255" key="1">
    <source>
        <dbReference type="HAMAP-Rule" id="MF_01579"/>
    </source>
</evidence>
<evidence type="ECO:0000305" key="2"/>
<reference key="1">
    <citation type="submission" date="2007-11" db="EMBL/GenBank/DDBJ databases">
        <authorList>
            <consortium name="The Salmonella enterica serovar Paratyphi B Genome Sequencing Project"/>
            <person name="McClelland M."/>
            <person name="Sanderson E.K."/>
            <person name="Porwollik S."/>
            <person name="Spieth J."/>
            <person name="Clifton W.S."/>
            <person name="Fulton R."/>
            <person name="Cordes M."/>
            <person name="Wollam A."/>
            <person name="Shah N."/>
            <person name="Pepin K."/>
            <person name="Bhonagiri V."/>
            <person name="Nash W."/>
            <person name="Johnson M."/>
            <person name="Thiruvilangam P."/>
            <person name="Wilson R."/>
        </authorList>
    </citation>
    <scope>NUCLEOTIDE SEQUENCE [LARGE SCALE GENOMIC DNA]</scope>
    <source>
        <strain>ATCC BAA-1250 / SPB7</strain>
    </source>
</reference>
<accession>A9MV57</accession>
<name>RSMF_SALPB</name>
<protein>
    <recommendedName>
        <fullName evidence="1">Ribosomal RNA small subunit methyltransferase F</fullName>
        <ecNumber evidence="1">2.1.1.178</ecNumber>
    </recommendedName>
    <alternativeName>
        <fullName evidence="1">16S rRNA m5C1407 methyltransferase</fullName>
    </alternativeName>
    <alternativeName>
        <fullName evidence="1">rRNA (cytosine-C(5)-)-methyltransferase RsmF</fullName>
    </alternativeName>
</protein>
<gene>
    <name evidence="1" type="primary">rsmF</name>
    <name type="ordered locus">SPAB_01359</name>
</gene>